<reference key="1">
    <citation type="journal article" date="2011" name="J. Bacteriol.">
        <title>Comparative genomics of 28 Salmonella enterica isolates: evidence for CRISPR-mediated adaptive sublineage evolution.</title>
        <authorList>
            <person name="Fricke W.F."/>
            <person name="Mammel M.K."/>
            <person name="McDermott P.F."/>
            <person name="Tartera C."/>
            <person name="White D.G."/>
            <person name="Leclerc J.E."/>
            <person name="Ravel J."/>
            <person name="Cebula T.A."/>
        </authorList>
    </citation>
    <scope>NUCLEOTIDE SEQUENCE [LARGE SCALE GENOMIC DNA]</scope>
    <source>
        <strain>SL476</strain>
    </source>
</reference>
<name>PPNP_SALHS</name>
<organism>
    <name type="scientific">Salmonella heidelberg (strain SL476)</name>
    <dbReference type="NCBI Taxonomy" id="454169"/>
    <lineage>
        <taxon>Bacteria</taxon>
        <taxon>Pseudomonadati</taxon>
        <taxon>Pseudomonadota</taxon>
        <taxon>Gammaproteobacteria</taxon>
        <taxon>Enterobacterales</taxon>
        <taxon>Enterobacteriaceae</taxon>
        <taxon>Salmonella</taxon>
    </lineage>
</organism>
<accession>B4T8N0</accession>
<evidence type="ECO:0000255" key="1">
    <source>
        <dbReference type="HAMAP-Rule" id="MF_01537"/>
    </source>
</evidence>
<keyword id="KW-0328">Glycosyltransferase</keyword>
<keyword id="KW-0808">Transferase</keyword>
<gene>
    <name evidence="1" type="primary">ppnP</name>
    <name type="ordered locus">SeHA_C0489</name>
</gene>
<dbReference type="EC" id="2.4.2.1" evidence="1"/>
<dbReference type="EC" id="2.4.2.2" evidence="1"/>
<dbReference type="EMBL" id="CP001120">
    <property type="protein sequence ID" value="ACF69926.1"/>
    <property type="molecule type" value="Genomic_DNA"/>
</dbReference>
<dbReference type="RefSeq" id="WP_000941950.1">
    <property type="nucleotide sequence ID" value="NC_011083.1"/>
</dbReference>
<dbReference type="SMR" id="B4T8N0"/>
<dbReference type="KEGG" id="seh:SeHA_C0489"/>
<dbReference type="HOGENOM" id="CLU_157874_0_0_6"/>
<dbReference type="Proteomes" id="UP000001866">
    <property type="component" value="Chromosome"/>
</dbReference>
<dbReference type="GO" id="GO:0005829">
    <property type="term" value="C:cytosol"/>
    <property type="evidence" value="ECO:0007669"/>
    <property type="project" value="TreeGrafter"/>
</dbReference>
<dbReference type="GO" id="GO:0047975">
    <property type="term" value="F:guanosine phosphorylase activity"/>
    <property type="evidence" value="ECO:0007669"/>
    <property type="project" value="UniProtKB-EC"/>
</dbReference>
<dbReference type="GO" id="GO:0004731">
    <property type="term" value="F:purine-nucleoside phosphorylase activity"/>
    <property type="evidence" value="ECO:0007669"/>
    <property type="project" value="UniProtKB-UniRule"/>
</dbReference>
<dbReference type="GO" id="GO:0009032">
    <property type="term" value="F:thymidine phosphorylase activity"/>
    <property type="evidence" value="ECO:0007669"/>
    <property type="project" value="UniProtKB-EC"/>
</dbReference>
<dbReference type="GO" id="GO:0004850">
    <property type="term" value="F:uridine phosphorylase activity"/>
    <property type="evidence" value="ECO:0007669"/>
    <property type="project" value="UniProtKB-EC"/>
</dbReference>
<dbReference type="CDD" id="cd20296">
    <property type="entry name" value="cupin_PpnP-like"/>
    <property type="match status" value="1"/>
</dbReference>
<dbReference type="FunFam" id="2.60.120.10:FF:000016">
    <property type="entry name" value="Pyrimidine/purine nucleoside phosphorylase"/>
    <property type="match status" value="1"/>
</dbReference>
<dbReference type="Gene3D" id="2.60.120.10">
    <property type="entry name" value="Jelly Rolls"/>
    <property type="match status" value="1"/>
</dbReference>
<dbReference type="HAMAP" id="MF_01537">
    <property type="entry name" value="Nucleos_phosphorylase_PpnP"/>
    <property type="match status" value="1"/>
</dbReference>
<dbReference type="InterPro" id="IPR009664">
    <property type="entry name" value="Ppnp"/>
</dbReference>
<dbReference type="InterPro" id="IPR014710">
    <property type="entry name" value="RmlC-like_jellyroll"/>
</dbReference>
<dbReference type="InterPro" id="IPR011051">
    <property type="entry name" value="RmlC_Cupin_sf"/>
</dbReference>
<dbReference type="NCBIfam" id="NF007875">
    <property type="entry name" value="PRK10579.1"/>
    <property type="match status" value="1"/>
</dbReference>
<dbReference type="PANTHER" id="PTHR36540">
    <property type="entry name" value="PYRIMIDINE/PURINE NUCLEOSIDE PHOSPHORYLASE"/>
    <property type="match status" value="1"/>
</dbReference>
<dbReference type="PANTHER" id="PTHR36540:SF1">
    <property type="entry name" value="PYRIMIDINE_PURINE NUCLEOSIDE PHOSPHORYLASE"/>
    <property type="match status" value="1"/>
</dbReference>
<dbReference type="Pfam" id="PF06865">
    <property type="entry name" value="Ppnp"/>
    <property type="match status" value="1"/>
</dbReference>
<dbReference type="SUPFAM" id="SSF51182">
    <property type="entry name" value="RmlC-like cupins"/>
    <property type="match status" value="1"/>
</dbReference>
<comment type="function">
    <text evidence="1">Catalyzes the phosphorolysis of diverse nucleosides, yielding D-ribose 1-phosphate and the respective free bases. Can use uridine, adenosine, guanosine, cytidine, thymidine, inosine and xanthosine as substrates. Also catalyzes the reverse reactions.</text>
</comment>
<comment type="catalytic activity">
    <reaction evidence="1">
        <text>a purine D-ribonucleoside + phosphate = a purine nucleobase + alpha-D-ribose 1-phosphate</text>
        <dbReference type="Rhea" id="RHEA:19805"/>
        <dbReference type="ChEBI" id="CHEBI:26386"/>
        <dbReference type="ChEBI" id="CHEBI:43474"/>
        <dbReference type="ChEBI" id="CHEBI:57720"/>
        <dbReference type="ChEBI" id="CHEBI:142355"/>
        <dbReference type="EC" id="2.4.2.1"/>
    </reaction>
</comment>
<comment type="catalytic activity">
    <reaction evidence="1">
        <text>adenosine + phosphate = alpha-D-ribose 1-phosphate + adenine</text>
        <dbReference type="Rhea" id="RHEA:27642"/>
        <dbReference type="ChEBI" id="CHEBI:16335"/>
        <dbReference type="ChEBI" id="CHEBI:16708"/>
        <dbReference type="ChEBI" id="CHEBI:43474"/>
        <dbReference type="ChEBI" id="CHEBI:57720"/>
        <dbReference type="EC" id="2.4.2.1"/>
    </reaction>
</comment>
<comment type="catalytic activity">
    <reaction evidence="1">
        <text>cytidine + phosphate = cytosine + alpha-D-ribose 1-phosphate</text>
        <dbReference type="Rhea" id="RHEA:52540"/>
        <dbReference type="ChEBI" id="CHEBI:16040"/>
        <dbReference type="ChEBI" id="CHEBI:17562"/>
        <dbReference type="ChEBI" id="CHEBI:43474"/>
        <dbReference type="ChEBI" id="CHEBI:57720"/>
        <dbReference type="EC" id="2.4.2.2"/>
    </reaction>
</comment>
<comment type="catalytic activity">
    <reaction evidence="1">
        <text>guanosine + phosphate = alpha-D-ribose 1-phosphate + guanine</text>
        <dbReference type="Rhea" id="RHEA:13233"/>
        <dbReference type="ChEBI" id="CHEBI:16235"/>
        <dbReference type="ChEBI" id="CHEBI:16750"/>
        <dbReference type="ChEBI" id="CHEBI:43474"/>
        <dbReference type="ChEBI" id="CHEBI:57720"/>
        <dbReference type="EC" id="2.4.2.1"/>
    </reaction>
</comment>
<comment type="catalytic activity">
    <reaction evidence="1">
        <text>inosine + phosphate = alpha-D-ribose 1-phosphate + hypoxanthine</text>
        <dbReference type="Rhea" id="RHEA:27646"/>
        <dbReference type="ChEBI" id="CHEBI:17368"/>
        <dbReference type="ChEBI" id="CHEBI:17596"/>
        <dbReference type="ChEBI" id="CHEBI:43474"/>
        <dbReference type="ChEBI" id="CHEBI:57720"/>
        <dbReference type="EC" id="2.4.2.1"/>
    </reaction>
</comment>
<comment type="catalytic activity">
    <reaction evidence="1">
        <text>thymidine + phosphate = 2-deoxy-alpha-D-ribose 1-phosphate + thymine</text>
        <dbReference type="Rhea" id="RHEA:16037"/>
        <dbReference type="ChEBI" id="CHEBI:17748"/>
        <dbReference type="ChEBI" id="CHEBI:17821"/>
        <dbReference type="ChEBI" id="CHEBI:43474"/>
        <dbReference type="ChEBI" id="CHEBI:57259"/>
        <dbReference type="EC" id="2.4.2.2"/>
    </reaction>
</comment>
<comment type="catalytic activity">
    <reaction evidence="1">
        <text>uridine + phosphate = alpha-D-ribose 1-phosphate + uracil</text>
        <dbReference type="Rhea" id="RHEA:24388"/>
        <dbReference type="ChEBI" id="CHEBI:16704"/>
        <dbReference type="ChEBI" id="CHEBI:17568"/>
        <dbReference type="ChEBI" id="CHEBI:43474"/>
        <dbReference type="ChEBI" id="CHEBI:57720"/>
        <dbReference type="EC" id="2.4.2.2"/>
    </reaction>
</comment>
<comment type="catalytic activity">
    <reaction evidence="1">
        <text>xanthosine + phosphate = alpha-D-ribose 1-phosphate + xanthine</text>
        <dbReference type="Rhea" id="RHEA:27638"/>
        <dbReference type="ChEBI" id="CHEBI:17712"/>
        <dbReference type="ChEBI" id="CHEBI:18107"/>
        <dbReference type="ChEBI" id="CHEBI:43474"/>
        <dbReference type="ChEBI" id="CHEBI:57720"/>
        <dbReference type="EC" id="2.4.2.1"/>
    </reaction>
</comment>
<comment type="similarity">
    <text evidence="1">Belongs to the nucleoside phosphorylase PpnP family.</text>
</comment>
<protein>
    <recommendedName>
        <fullName evidence="1">Pyrimidine/purine nucleoside phosphorylase</fullName>
        <ecNumber evidence="1">2.4.2.1</ecNumber>
        <ecNumber evidence="1">2.4.2.2</ecNumber>
    </recommendedName>
    <alternativeName>
        <fullName evidence="1">Adenosine phosphorylase</fullName>
    </alternativeName>
    <alternativeName>
        <fullName evidence="1">Cytidine phosphorylase</fullName>
    </alternativeName>
    <alternativeName>
        <fullName evidence="1">Guanosine phosphorylase</fullName>
    </alternativeName>
    <alternativeName>
        <fullName evidence="1">Inosine phosphorylase</fullName>
    </alternativeName>
    <alternativeName>
        <fullName evidence="1">Thymidine phosphorylase</fullName>
    </alternativeName>
    <alternativeName>
        <fullName evidence="1">Uridine phosphorylase</fullName>
    </alternativeName>
    <alternativeName>
        <fullName evidence="1">Xanthosine phosphorylase</fullName>
    </alternativeName>
</protein>
<sequence length="94" mass="10158">MLQSNEYFSGKVKSIGFTSSSTGRASVGVMAEGEYTFGTAEPEEMTVVSGALKVLLPGTVEWKVYAAGEVFNVPGHSEFHLQVAEPTSYLCRYL</sequence>
<proteinExistence type="inferred from homology"/>
<feature type="chain" id="PRO_1000198677" description="Pyrimidine/purine nucleoside phosphorylase">
    <location>
        <begin position="1"/>
        <end position="94"/>
    </location>
</feature>